<proteinExistence type="evidence at protein level"/>
<sequence>MKIGIIGAMEEEVTLLRDKIENRQTITIGGSEIYTGQLHGVDVALLKSGIGKVAAAMGATLLLERCQPDVIINTGSAGGLASTLKVGDIVVSDEARYHDADVTAFGYEYGQLPGCPAGFKADEKLVAAAESCIKALDLNAVRGLIVSGDAFINGSVGLAKIRHNFPQAIAVEMEATAIAHVCHNFKVPFVVVRAISDVADQQSHLSFEEFLAVAARQSTLMVENLVQNLARG</sequence>
<accession>A6T4W3</accession>
<comment type="function">
    <text evidence="1">Catalyzes the irreversible cleavage of the glycosidic bond in both 5'-methylthioadenosine (MTA) and S-adenosylhomocysteine (SAH/AdoHcy) to adenine and the corresponding thioribose, 5'-methylthioribose and S-ribosylhomocysteine, respectively. Also cleaves 5'-deoxyadenosine, a toxic by-product of radical S-adenosylmethionine (SAM) enzymes, into 5-deoxyribose and adenine. Thus, is required for in vivo function of the radical SAM enzymes biotin synthase and lipoic acid synthase, that are inhibited by 5'-deoxyadenosine accumulation.</text>
</comment>
<comment type="catalytic activity">
    <reaction evidence="1">
        <text>S-adenosyl-L-homocysteine + H2O = S-(5-deoxy-D-ribos-5-yl)-L-homocysteine + adenine</text>
        <dbReference type="Rhea" id="RHEA:17805"/>
        <dbReference type="ChEBI" id="CHEBI:15377"/>
        <dbReference type="ChEBI" id="CHEBI:16708"/>
        <dbReference type="ChEBI" id="CHEBI:57856"/>
        <dbReference type="ChEBI" id="CHEBI:58195"/>
        <dbReference type="EC" id="3.2.2.9"/>
    </reaction>
</comment>
<comment type="catalytic activity">
    <reaction evidence="1">
        <text>S-methyl-5'-thioadenosine + H2O = 5-(methylsulfanyl)-D-ribose + adenine</text>
        <dbReference type="Rhea" id="RHEA:13617"/>
        <dbReference type="ChEBI" id="CHEBI:15377"/>
        <dbReference type="ChEBI" id="CHEBI:16708"/>
        <dbReference type="ChEBI" id="CHEBI:17509"/>
        <dbReference type="ChEBI" id="CHEBI:78440"/>
        <dbReference type="EC" id="3.2.2.9"/>
    </reaction>
</comment>
<comment type="catalytic activity">
    <reaction evidence="1">
        <text>5'-deoxyadenosine + H2O = 5-deoxy-D-ribose + adenine</text>
        <dbReference type="Rhea" id="RHEA:29859"/>
        <dbReference type="ChEBI" id="CHEBI:15377"/>
        <dbReference type="ChEBI" id="CHEBI:16708"/>
        <dbReference type="ChEBI" id="CHEBI:17319"/>
        <dbReference type="ChEBI" id="CHEBI:149540"/>
        <dbReference type="EC" id="3.2.2.9"/>
    </reaction>
    <physiologicalReaction direction="left-to-right" evidence="1">
        <dbReference type="Rhea" id="RHEA:29860"/>
    </physiologicalReaction>
</comment>
<comment type="pathway">
    <text evidence="1">Amino-acid biosynthesis; L-methionine biosynthesis via salvage pathway; S-methyl-5-thio-alpha-D-ribose 1-phosphate from S-methyl-5'-thioadenosine (hydrolase route): step 1/2.</text>
</comment>
<comment type="subunit">
    <text evidence="1">Homodimer.</text>
</comment>
<comment type="similarity">
    <text evidence="1">Belongs to the PNP/UDP phosphorylase family. MtnN subfamily.</text>
</comment>
<gene>
    <name evidence="1" type="primary">mtnN</name>
    <name type="ordered locus">KPN78578_01730</name>
    <name type="ORF">KPN_00174</name>
</gene>
<evidence type="ECO:0000255" key="1">
    <source>
        <dbReference type="HAMAP-Rule" id="MF_01684"/>
    </source>
</evidence>
<evidence type="ECO:0007829" key="2">
    <source>
        <dbReference type="PDB" id="4G89"/>
    </source>
</evidence>
<keyword id="KW-0002">3D-structure</keyword>
<keyword id="KW-0028">Amino-acid biosynthesis</keyword>
<keyword id="KW-0378">Hydrolase</keyword>
<keyword id="KW-0486">Methionine biosynthesis</keyword>
<dbReference type="EC" id="3.2.2.9" evidence="1"/>
<dbReference type="EMBL" id="CP000647">
    <property type="protein sequence ID" value="ABR75634.1"/>
    <property type="molecule type" value="Genomic_DNA"/>
</dbReference>
<dbReference type="RefSeq" id="WP_002889282.1">
    <property type="nucleotide sequence ID" value="NC_009648.1"/>
</dbReference>
<dbReference type="PDB" id="4G89">
    <property type="method" value="X-ray"/>
    <property type="resolution" value="2.10 A"/>
    <property type="chains" value="A/B=1-232"/>
</dbReference>
<dbReference type="PDBsum" id="4G89"/>
<dbReference type="SMR" id="A6T4W3"/>
<dbReference type="STRING" id="272620.KPN_00174"/>
<dbReference type="jPOST" id="A6T4W3"/>
<dbReference type="PaxDb" id="272620-KPN_00174"/>
<dbReference type="EnsemblBacteria" id="ABR75634">
    <property type="protein sequence ID" value="ABR75634"/>
    <property type="gene ID" value="KPN_00174"/>
</dbReference>
<dbReference type="KEGG" id="kpn:KPN_00174"/>
<dbReference type="HOGENOM" id="CLU_031248_2_2_6"/>
<dbReference type="UniPathway" id="UPA00904">
    <property type="reaction ID" value="UER00871"/>
</dbReference>
<dbReference type="Proteomes" id="UP000000265">
    <property type="component" value="Chromosome"/>
</dbReference>
<dbReference type="GO" id="GO:0005829">
    <property type="term" value="C:cytosol"/>
    <property type="evidence" value="ECO:0007669"/>
    <property type="project" value="TreeGrafter"/>
</dbReference>
<dbReference type="GO" id="GO:0008782">
    <property type="term" value="F:adenosylhomocysteine nucleosidase activity"/>
    <property type="evidence" value="ECO:0007669"/>
    <property type="project" value="UniProtKB-UniRule"/>
</dbReference>
<dbReference type="GO" id="GO:0008930">
    <property type="term" value="F:methylthioadenosine nucleosidase activity"/>
    <property type="evidence" value="ECO:0007669"/>
    <property type="project" value="UniProtKB-UniRule"/>
</dbReference>
<dbReference type="GO" id="GO:0019509">
    <property type="term" value="P:L-methionine salvage from methylthioadenosine"/>
    <property type="evidence" value="ECO:0007669"/>
    <property type="project" value="UniProtKB-UniRule"/>
</dbReference>
<dbReference type="GO" id="GO:0019284">
    <property type="term" value="P:L-methionine salvage from S-adenosylmethionine"/>
    <property type="evidence" value="ECO:0007669"/>
    <property type="project" value="TreeGrafter"/>
</dbReference>
<dbReference type="GO" id="GO:0046124">
    <property type="term" value="P:purine deoxyribonucleoside catabolic process"/>
    <property type="evidence" value="ECO:0007669"/>
    <property type="project" value="UniProtKB-UniRule"/>
</dbReference>
<dbReference type="CDD" id="cd09008">
    <property type="entry name" value="MTAN"/>
    <property type="match status" value="1"/>
</dbReference>
<dbReference type="FunFam" id="3.40.50.1580:FF:000001">
    <property type="entry name" value="MTA/SAH nucleosidase family protein"/>
    <property type="match status" value="1"/>
</dbReference>
<dbReference type="Gene3D" id="3.40.50.1580">
    <property type="entry name" value="Nucleoside phosphorylase domain"/>
    <property type="match status" value="1"/>
</dbReference>
<dbReference type="HAMAP" id="MF_01684">
    <property type="entry name" value="Salvage_MtnN"/>
    <property type="match status" value="1"/>
</dbReference>
<dbReference type="InterPro" id="IPR010049">
    <property type="entry name" value="MTA_SAH_Nsdase"/>
</dbReference>
<dbReference type="InterPro" id="IPR000845">
    <property type="entry name" value="Nucleoside_phosphorylase_d"/>
</dbReference>
<dbReference type="InterPro" id="IPR035994">
    <property type="entry name" value="Nucleoside_phosphorylase_sf"/>
</dbReference>
<dbReference type="NCBIfam" id="TIGR01704">
    <property type="entry name" value="MTA_SAH-Nsdase"/>
    <property type="match status" value="1"/>
</dbReference>
<dbReference type="NCBIfam" id="NF004079">
    <property type="entry name" value="PRK05584.1"/>
    <property type="match status" value="1"/>
</dbReference>
<dbReference type="PANTHER" id="PTHR46832">
    <property type="entry name" value="5'-METHYLTHIOADENOSINE/S-ADENOSYLHOMOCYSTEINE NUCLEOSIDASE"/>
    <property type="match status" value="1"/>
</dbReference>
<dbReference type="PANTHER" id="PTHR46832:SF1">
    <property type="entry name" value="5'-METHYLTHIOADENOSINE_S-ADENOSYLHOMOCYSTEINE NUCLEOSIDASE"/>
    <property type="match status" value="1"/>
</dbReference>
<dbReference type="Pfam" id="PF01048">
    <property type="entry name" value="PNP_UDP_1"/>
    <property type="match status" value="1"/>
</dbReference>
<dbReference type="SUPFAM" id="SSF53167">
    <property type="entry name" value="Purine and uridine phosphorylases"/>
    <property type="match status" value="1"/>
</dbReference>
<feature type="chain" id="PRO_0000359311" description="5'-methylthioadenosine/S-adenosylhomocysteine nucleosidase">
    <location>
        <begin position="1"/>
        <end position="232"/>
    </location>
</feature>
<feature type="active site" description="Proton acceptor" evidence="1">
    <location>
        <position position="12"/>
    </location>
</feature>
<feature type="active site" description="Proton donor" evidence="1">
    <location>
        <position position="197"/>
    </location>
</feature>
<feature type="binding site" evidence="1">
    <location>
        <position position="78"/>
    </location>
    <ligand>
        <name>substrate</name>
    </ligand>
</feature>
<feature type="binding site" evidence="1">
    <location>
        <position position="152"/>
    </location>
    <ligand>
        <name>substrate</name>
    </ligand>
</feature>
<feature type="binding site" evidence="1">
    <location>
        <begin position="173"/>
        <end position="174"/>
    </location>
    <ligand>
        <name>substrate</name>
    </ligand>
</feature>
<feature type="strand" evidence="2">
    <location>
        <begin position="3"/>
        <end position="9"/>
    </location>
</feature>
<feature type="helix" evidence="2">
    <location>
        <begin position="10"/>
        <end position="18"/>
    </location>
</feature>
<feature type="strand" evidence="2">
    <location>
        <begin position="21"/>
        <end position="28"/>
    </location>
</feature>
<feature type="strand" evidence="2">
    <location>
        <begin position="31"/>
        <end position="38"/>
    </location>
</feature>
<feature type="strand" evidence="2">
    <location>
        <begin position="41"/>
        <end position="47"/>
    </location>
</feature>
<feature type="helix" evidence="2">
    <location>
        <begin position="52"/>
        <end position="66"/>
    </location>
</feature>
<feature type="strand" evidence="2">
    <location>
        <begin position="69"/>
        <end position="79"/>
    </location>
</feature>
<feature type="strand" evidence="2">
    <location>
        <begin position="89"/>
        <end position="99"/>
    </location>
</feature>
<feature type="helix" evidence="2">
    <location>
        <begin position="103"/>
        <end position="105"/>
    </location>
</feature>
<feature type="strand" evidence="2">
    <location>
        <begin position="117"/>
        <end position="120"/>
    </location>
</feature>
<feature type="helix" evidence="2">
    <location>
        <begin position="123"/>
        <end position="136"/>
    </location>
</feature>
<feature type="strand" evidence="2">
    <location>
        <begin position="140"/>
        <end position="147"/>
    </location>
</feature>
<feature type="helix" evidence="2">
    <location>
        <begin position="155"/>
        <end position="164"/>
    </location>
</feature>
<feature type="strand" evidence="2">
    <location>
        <begin position="168"/>
        <end position="174"/>
    </location>
</feature>
<feature type="helix" evidence="2">
    <location>
        <begin position="175"/>
        <end position="185"/>
    </location>
</feature>
<feature type="strand" evidence="2">
    <location>
        <begin position="189"/>
        <end position="197"/>
    </location>
</feature>
<feature type="helix" evidence="2">
    <location>
        <begin position="203"/>
        <end position="230"/>
    </location>
</feature>
<reference key="1">
    <citation type="submission" date="2006-09" db="EMBL/GenBank/DDBJ databases">
        <authorList>
            <consortium name="The Klebsiella pneumonia Genome Sequencing Project"/>
            <person name="McClelland M."/>
            <person name="Sanderson E.K."/>
            <person name="Spieth J."/>
            <person name="Clifton W.S."/>
            <person name="Latreille P."/>
            <person name="Sabo A."/>
            <person name="Pepin K."/>
            <person name="Bhonagiri V."/>
            <person name="Porwollik S."/>
            <person name="Ali J."/>
            <person name="Wilson R.K."/>
        </authorList>
    </citation>
    <scope>NUCLEOTIDE SEQUENCE [LARGE SCALE GENOMIC DNA]</scope>
    <source>
        <strain>ATCC 700721 / MGH 78578</strain>
    </source>
</reference>
<organism>
    <name type="scientific">Klebsiella pneumoniae subsp. pneumoniae (strain ATCC 700721 / MGH 78578)</name>
    <dbReference type="NCBI Taxonomy" id="272620"/>
    <lineage>
        <taxon>Bacteria</taxon>
        <taxon>Pseudomonadati</taxon>
        <taxon>Pseudomonadota</taxon>
        <taxon>Gammaproteobacteria</taxon>
        <taxon>Enterobacterales</taxon>
        <taxon>Enterobacteriaceae</taxon>
        <taxon>Klebsiella/Raoultella group</taxon>
        <taxon>Klebsiella</taxon>
        <taxon>Klebsiella pneumoniae complex</taxon>
    </lineage>
</organism>
<name>MTNN_KLEP7</name>
<protein>
    <recommendedName>
        <fullName evidence="1">5'-methylthioadenosine/S-adenosylhomocysteine nucleosidase</fullName>
        <shortName evidence="1">MTA/SAH nucleosidase</shortName>
        <shortName evidence="1">MTAN</shortName>
        <ecNumber evidence="1">3.2.2.9</ecNumber>
    </recommendedName>
    <alternativeName>
        <fullName evidence="1">5'-deoxyadenosine nucleosidase</fullName>
        <shortName evidence="1">DOA nucleosidase</shortName>
        <shortName evidence="1">dAdo nucleosidase</shortName>
    </alternativeName>
    <alternativeName>
        <fullName evidence="1">5'-methylthioadenosine nucleosidase</fullName>
        <shortName evidence="1">MTA nucleosidase</shortName>
    </alternativeName>
    <alternativeName>
        <fullName evidence="1">S-adenosylhomocysteine nucleosidase</fullName>
        <shortName evidence="1">AdoHcy nucleosidase</shortName>
        <shortName evidence="1">SAH nucleosidase</shortName>
        <shortName evidence="1">SRH nucleosidase</shortName>
    </alternativeName>
</protein>